<protein>
    <recommendedName>
        <fullName evidence="4">Orphan methyltransferase M.SssI</fullName>
        <shortName evidence="5">M.SssI</shortName>
        <ecNumber evidence="3">2.1.1.37</ecNumber>
    </recommendedName>
    <alternativeName>
        <fullName evidence="5">CpG DNA methylase</fullName>
    </alternativeName>
    <alternativeName>
        <fullName>Cytosine-specific methyltransferase SssI</fullName>
    </alternativeName>
</protein>
<dbReference type="EC" id="2.1.1.37" evidence="3"/>
<dbReference type="EMBL" id="X17195">
    <property type="protein sequence ID" value="CAA35058.1"/>
    <property type="molecule type" value="Genomic_DNA"/>
</dbReference>
<dbReference type="SMR" id="P15840"/>
<dbReference type="BindingDB" id="P15840"/>
<dbReference type="ChEMBL" id="CHEMBL4373"/>
<dbReference type="BRENDA" id="2.1.1.37">
    <property type="organism ID" value="14199"/>
</dbReference>
<dbReference type="PRO" id="PR:P15840"/>
<dbReference type="GO" id="GO:0003886">
    <property type="term" value="F:DNA (cytosine-5-)-methyltransferase activity"/>
    <property type="evidence" value="ECO:0007669"/>
    <property type="project" value="UniProtKB-EC"/>
</dbReference>
<dbReference type="GO" id="GO:0003677">
    <property type="term" value="F:DNA binding"/>
    <property type="evidence" value="ECO:0007669"/>
    <property type="project" value="UniProtKB-KW"/>
</dbReference>
<dbReference type="GO" id="GO:0009307">
    <property type="term" value="P:DNA restriction-modification system"/>
    <property type="evidence" value="ECO:0007669"/>
    <property type="project" value="UniProtKB-KW"/>
</dbReference>
<dbReference type="GO" id="GO:0032259">
    <property type="term" value="P:methylation"/>
    <property type="evidence" value="ECO:0007669"/>
    <property type="project" value="UniProtKB-KW"/>
</dbReference>
<dbReference type="Gene3D" id="3.90.120.10">
    <property type="entry name" value="DNA Methylase, subunit A, domain 2"/>
    <property type="match status" value="1"/>
</dbReference>
<dbReference type="Gene3D" id="3.40.50.150">
    <property type="entry name" value="Vaccinia Virus protein VP39"/>
    <property type="match status" value="1"/>
</dbReference>
<dbReference type="InterPro" id="IPR050750">
    <property type="entry name" value="C5-MTase"/>
</dbReference>
<dbReference type="InterPro" id="IPR018117">
    <property type="entry name" value="C5_DNA_meth_AS"/>
</dbReference>
<dbReference type="InterPro" id="IPR001525">
    <property type="entry name" value="C5_MeTfrase"/>
</dbReference>
<dbReference type="InterPro" id="IPR029063">
    <property type="entry name" value="SAM-dependent_MTases_sf"/>
</dbReference>
<dbReference type="NCBIfam" id="TIGR00675">
    <property type="entry name" value="dcm"/>
    <property type="match status" value="1"/>
</dbReference>
<dbReference type="PANTHER" id="PTHR46098">
    <property type="entry name" value="TRNA (CYTOSINE(38)-C(5))-METHYLTRANSFERASE"/>
    <property type="match status" value="1"/>
</dbReference>
<dbReference type="PANTHER" id="PTHR46098:SF1">
    <property type="entry name" value="TRNA (CYTOSINE(38)-C(5))-METHYLTRANSFERASE"/>
    <property type="match status" value="1"/>
</dbReference>
<dbReference type="Pfam" id="PF00145">
    <property type="entry name" value="DNA_methylase"/>
    <property type="match status" value="1"/>
</dbReference>
<dbReference type="PRINTS" id="PR00105">
    <property type="entry name" value="C5METTRFRASE"/>
</dbReference>
<dbReference type="SUPFAM" id="SSF53335">
    <property type="entry name" value="S-adenosyl-L-methionine-dependent methyltransferases"/>
    <property type="match status" value="1"/>
</dbReference>
<dbReference type="PROSITE" id="PS00094">
    <property type="entry name" value="C5_MTASE_1"/>
    <property type="match status" value="1"/>
</dbReference>
<dbReference type="PROSITE" id="PS00095">
    <property type="entry name" value="C5_MTASE_2"/>
    <property type="match status" value="1"/>
</dbReference>
<dbReference type="PROSITE" id="PS51679">
    <property type="entry name" value="SAM_MT_C5"/>
    <property type="match status" value="1"/>
</dbReference>
<reference key="1">
    <citation type="journal article" date="1990" name="Nucleic Acids Res.">
        <title>Cloning, characterization, and expression in Escherichia coli of the gene coding for the CpG DNA methylase from Spiroplasma sp. strain MQ1(M.SssI).</title>
        <authorList>
            <person name="Renbaum P."/>
            <person name="Abrahamove D."/>
            <person name="Fainsod A."/>
            <person name="Wilson G."/>
            <person name="Rottem S."/>
            <person name="Razin A."/>
        </authorList>
    </citation>
    <scope>NUCLEOTIDE SEQUENCE [GENOMIC DNA]</scope>
    <scope>FUNCTION</scope>
    <scope>CATALYTIC ACTIVITY</scope>
    <source>
        <strain>ATCC 33825 / MQ-1</strain>
    </source>
</reference>
<reference key="2">
    <citation type="journal article" date="2003" name="Nucleic Acids Res.">
        <title>A nomenclature for restriction enzymes, DNA methyltransferases, homing endonucleases and their genes.</title>
        <authorList>
            <person name="Roberts R.J."/>
            <person name="Belfort M."/>
            <person name="Bestor T."/>
            <person name="Bhagwat A.S."/>
            <person name="Bickle T.A."/>
            <person name="Bitinaite J."/>
            <person name="Blumenthal R.M."/>
            <person name="Degtyarev S.K."/>
            <person name="Dryden D.T."/>
            <person name="Dybvig K."/>
            <person name="Firman K."/>
            <person name="Gromova E.S."/>
            <person name="Gumport R.I."/>
            <person name="Halford S.E."/>
            <person name="Hattman S."/>
            <person name="Heitman J."/>
            <person name="Hornby D.P."/>
            <person name="Janulaitis A."/>
            <person name="Jeltsch A."/>
            <person name="Josephsen J."/>
            <person name="Kiss A."/>
            <person name="Klaenhammer T.R."/>
            <person name="Kobayashi I."/>
            <person name="Kong H."/>
            <person name="Krueger D.H."/>
            <person name="Lacks S."/>
            <person name="Marinus M.G."/>
            <person name="Miyahara M."/>
            <person name="Morgan R.D."/>
            <person name="Murray N.E."/>
            <person name="Nagaraja V."/>
            <person name="Piekarowicz A."/>
            <person name="Pingoud A."/>
            <person name="Raleigh E."/>
            <person name="Rao D.N."/>
            <person name="Reich N."/>
            <person name="Repin V.E."/>
            <person name="Selker E.U."/>
            <person name="Shaw P.C."/>
            <person name="Stein D.C."/>
            <person name="Stoddard B.L."/>
            <person name="Szybalski W."/>
            <person name="Trautner T.A."/>
            <person name="Van Etten J.L."/>
            <person name="Vitor J.M."/>
            <person name="Wilson G.G."/>
            <person name="Xu S.Y."/>
        </authorList>
    </citation>
    <scope>NOMENCLATURE</scope>
</reference>
<gene>
    <name type="primary">sssIM</name>
    <name type="synonym">mssSI</name>
</gene>
<proteinExistence type="evidence at protein level"/>
<evidence type="ECO:0000255" key="1">
    <source>
        <dbReference type="PROSITE-ProRule" id="PRU01016"/>
    </source>
</evidence>
<evidence type="ECO:0000255" key="2">
    <source>
        <dbReference type="PROSITE-ProRule" id="PRU10018"/>
    </source>
</evidence>
<evidence type="ECO:0000269" key="3">
    <source>
    </source>
</evidence>
<evidence type="ECO:0000303" key="4">
    <source>
    </source>
</evidence>
<evidence type="ECO:0000303" key="5">
    <source>
    </source>
</evidence>
<organism>
    <name type="scientific">Spiroplasma monobiae (strain ATCC 33825 / MQ-1)</name>
    <dbReference type="NCBI Taxonomy" id="2136"/>
    <lineage>
        <taxon>Bacteria</taxon>
        <taxon>Bacillati</taxon>
        <taxon>Mycoplasmatota</taxon>
        <taxon>Mollicutes</taxon>
        <taxon>Entomoplasmatales</taxon>
        <taxon>Spiroplasmataceae</taxon>
        <taxon>Spiroplasma</taxon>
    </lineage>
</organism>
<name>MTSI_SPISQ</name>
<comment type="function">
    <text evidence="3">This de novo methylase acts completely and exclusively on CG residues in DNA; methylates unmethylated and hemi-methylated DNA.</text>
</comment>
<comment type="catalytic activity">
    <reaction evidence="2 3">
        <text>a 2'-deoxycytidine in DNA + S-adenosyl-L-methionine = a 5-methyl-2'-deoxycytidine in DNA + S-adenosyl-L-homocysteine + H(+)</text>
        <dbReference type="Rhea" id="RHEA:13681"/>
        <dbReference type="Rhea" id="RHEA-COMP:11369"/>
        <dbReference type="Rhea" id="RHEA-COMP:11370"/>
        <dbReference type="ChEBI" id="CHEBI:15378"/>
        <dbReference type="ChEBI" id="CHEBI:57856"/>
        <dbReference type="ChEBI" id="CHEBI:59789"/>
        <dbReference type="ChEBI" id="CHEBI:85452"/>
        <dbReference type="ChEBI" id="CHEBI:85454"/>
        <dbReference type="EC" id="2.1.1.37"/>
    </reaction>
</comment>
<comment type="similarity">
    <text evidence="1">Belongs to the class I-like SAM-binding methyltransferase superfamily. C5-methyltransferase family.</text>
</comment>
<feature type="chain" id="PRO_0000087912" description="Orphan methyltransferase M.SssI">
    <location>
        <begin position="1"/>
        <end position="386"/>
    </location>
</feature>
<feature type="domain" description="SAM-dependent MTase C5-type" evidence="1">
    <location>
        <begin position="11"/>
        <end position="386"/>
    </location>
</feature>
<feature type="active site" evidence="1 2">
    <location>
        <position position="141"/>
    </location>
</feature>
<accession>P15840</accession>
<sequence>MSKVENKTKKLRVFEAFAGIGAQRKALEKVRKDEYEIVGLAEWYVPAIVMYQAIHNNFHTKLEYKSVSREEMIDYLENKTLSWNSKNPVSNGYWKRKKDDELKIIYNAIKLSEKEGNIFDIRDLYKRTLKNIDLLTYSFPCQDLSQQGIQKGMKRGSGTRSGLLWEIERALDSTEKNDLPKYLLMENVGALLHKKNEEELNQWKQKLESLGYQNSIEVLNAADFGSSQARRRVFMISTLNEFVELPKGDKKPKSIKKVLNKIVSEKDILNNLLKYNLTEFKKTKSNINKASLIGYSKFNSEGYVYDPEFTGPTLTASGANSRIKIKDGSNIRKMNSDETFLYIGFDSQDGKRVNEIEFLTENQKIFVCGNSISVEVLEAIIDKIGG</sequence>
<keyword id="KW-0238">DNA-binding</keyword>
<keyword id="KW-0489">Methyltransferase</keyword>
<keyword id="KW-0680">Restriction system</keyword>
<keyword id="KW-0949">S-adenosyl-L-methionine</keyword>
<keyword id="KW-0808">Transferase</keyword>